<reference key="1">
    <citation type="submission" date="2007-08" db="EMBL/GenBank/DDBJ databases">
        <authorList>
            <consortium name="The Vibrio harveyi Genome Sequencing Project"/>
            <person name="Bassler B."/>
            <person name="Clifton S.W."/>
            <person name="Fulton L."/>
            <person name="Delehaunty K."/>
            <person name="Fronick C."/>
            <person name="Harrison M."/>
            <person name="Markivic C."/>
            <person name="Fulton R."/>
            <person name="Tin-Wollam A.-M."/>
            <person name="Shah N."/>
            <person name="Pepin K."/>
            <person name="Nash W."/>
            <person name="Thiruvilangam P."/>
            <person name="Bhonagiri V."/>
            <person name="Waters C."/>
            <person name="Tu K.C."/>
            <person name="Irgon J."/>
            <person name="Wilson R.K."/>
        </authorList>
    </citation>
    <scope>NUCLEOTIDE SEQUENCE [LARGE SCALE GENOMIC DNA]</scope>
    <source>
        <strain>ATCC BAA-1116 / BB120</strain>
    </source>
</reference>
<organism>
    <name type="scientific">Vibrio campbellii (strain ATCC BAA-1116)</name>
    <dbReference type="NCBI Taxonomy" id="2902295"/>
    <lineage>
        <taxon>Bacteria</taxon>
        <taxon>Pseudomonadati</taxon>
        <taxon>Pseudomonadota</taxon>
        <taxon>Gammaproteobacteria</taxon>
        <taxon>Vibrionales</taxon>
        <taxon>Vibrionaceae</taxon>
        <taxon>Vibrio</taxon>
    </lineage>
</organism>
<proteinExistence type="inferred from homology"/>
<keyword id="KW-0997">Cell inner membrane</keyword>
<keyword id="KW-1003">Cell membrane</keyword>
<keyword id="KW-0472">Membrane</keyword>
<keyword id="KW-0812">Transmembrane</keyword>
<keyword id="KW-1133">Transmembrane helix</keyword>
<gene>
    <name type="ordered locus">VIBHAR_00593</name>
</gene>
<feature type="chain" id="PRO_1000044735" description="UPF0761 membrane protein VIBHAR_00593">
    <location>
        <begin position="1"/>
        <end position="314"/>
    </location>
</feature>
<feature type="transmembrane region" description="Helical" evidence="1">
    <location>
        <begin position="41"/>
        <end position="61"/>
    </location>
</feature>
<feature type="transmembrane region" description="Helical" evidence="1">
    <location>
        <begin position="104"/>
        <end position="124"/>
    </location>
</feature>
<feature type="transmembrane region" description="Helical" evidence="1">
    <location>
        <begin position="143"/>
        <end position="163"/>
    </location>
</feature>
<feature type="transmembrane region" description="Helical" evidence="1">
    <location>
        <begin position="185"/>
        <end position="205"/>
    </location>
</feature>
<feature type="transmembrane region" description="Helical" evidence="1">
    <location>
        <begin position="217"/>
        <end position="237"/>
    </location>
</feature>
<feature type="transmembrane region" description="Helical" evidence="1">
    <location>
        <begin position="249"/>
        <end position="269"/>
    </location>
</feature>
<protein>
    <recommendedName>
        <fullName evidence="1">UPF0761 membrane protein VIBHAR_00593</fullName>
    </recommendedName>
</protein>
<evidence type="ECO:0000255" key="1">
    <source>
        <dbReference type="HAMAP-Rule" id="MF_00672"/>
    </source>
</evidence>
<sequence length="314" mass="34999">MNQLSESYKVRLSKLVPGSVAFFQYLLKRMTHDRVNVNAGYLAYITLLSIVPMLTVLLSILSKFPVFENVGETLQGYIIDNFVPASGDAVRTALQEFVSNTGKMTAVGGAFLFVAALMLISNIDKNLNYIWRVKDKRRPVFSFSMYWMVLTLGPILVGASIAVTSYVTSLKLIENETLTGAYNLFLRWLPLLLSFFAFMGLYFLVPNKKVYLSHGAIGAAIAAVLFELSKKGFAFYITQFPSYQLIYGALAAIPILFVWVYLCWLIVLIGAEVTAALGEREHWSDDLEMIHSTAELQLTDEGSESRDSANSTSQ</sequence>
<accession>A7MTU7</accession>
<dbReference type="EMBL" id="CP000789">
    <property type="protein sequence ID" value="ABU69595.1"/>
    <property type="molecule type" value="Genomic_DNA"/>
</dbReference>
<dbReference type="RefSeq" id="WP_012126767.1">
    <property type="nucleotide sequence ID" value="NC_009783.1"/>
</dbReference>
<dbReference type="KEGG" id="vha:VIBHAR_00593"/>
<dbReference type="PATRIC" id="fig|338187.25.peg.2022"/>
<dbReference type="Proteomes" id="UP000008152">
    <property type="component" value="Chromosome I"/>
</dbReference>
<dbReference type="GO" id="GO:0005886">
    <property type="term" value="C:plasma membrane"/>
    <property type="evidence" value="ECO:0007669"/>
    <property type="project" value="UniProtKB-SubCell"/>
</dbReference>
<dbReference type="HAMAP" id="MF_00672">
    <property type="entry name" value="UPF0761"/>
    <property type="match status" value="1"/>
</dbReference>
<dbReference type="InterPro" id="IPR023679">
    <property type="entry name" value="UPF0761_bac"/>
</dbReference>
<dbReference type="InterPro" id="IPR017039">
    <property type="entry name" value="Virul_fac_BrkB"/>
</dbReference>
<dbReference type="NCBIfam" id="NF002457">
    <property type="entry name" value="PRK01637.1"/>
    <property type="match status" value="1"/>
</dbReference>
<dbReference type="NCBIfam" id="TIGR00765">
    <property type="entry name" value="yihY_not_rbn"/>
    <property type="match status" value="1"/>
</dbReference>
<dbReference type="PANTHER" id="PTHR30213">
    <property type="entry name" value="INNER MEMBRANE PROTEIN YHJD"/>
    <property type="match status" value="1"/>
</dbReference>
<dbReference type="PANTHER" id="PTHR30213:SF0">
    <property type="entry name" value="UPF0761 MEMBRANE PROTEIN YIHY"/>
    <property type="match status" value="1"/>
</dbReference>
<dbReference type="Pfam" id="PF03631">
    <property type="entry name" value="Virul_fac_BrkB"/>
    <property type="match status" value="1"/>
</dbReference>
<dbReference type="PIRSF" id="PIRSF035875">
    <property type="entry name" value="RNase_BN"/>
    <property type="match status" value="1"/>
</dbReference>
<name>Y593_VIBC1</name>
<comment type="subcellular location">
    <subcellularLocation>
        <location evidence="1">Cell inner membrane</location>
        <topology evidence="1">Multi-pass membrane protein</topology>
    </subcellularLocation>
</comment>
<comment type="similarity">
    <text evidence="1">Belongs to the UPF0761 family.</text>
</comment>